<name>PURA_DROPS</name>
<organism>
    <name type="scientific">Drosophila pseudoobscura pseudoobscura</name>
    <name type="common">Fruit fly</name>
    <dbReference type="NCBI Taxonomy" id="46245"/>
    <lineage>
        <taxon>Eukaryota</taxon>
        <taxon>Metazoa</taxon>
        <taxon>Ecdysozoa</taxon>
        <taxon>Arthropoda</taxon>
        <taxon>Hexapoda</taxon>
        <taxon>Insecta</taxon>
        <taxon>Pterygota</taxon>
        <taxon>Neoptera</taxon>
        <taxon>Endopterygota</taxon>
        <taxon>Diptera</taxon>
        <taxon>Brachycera</taxon>
        <taxon>Muscomorpha</taxon>
        <taxon>Ephydroidea</taxon>
        <taxon>Drosophilidae</taxon>
        <taxon>Drosophila</taxon>
        <taxon>Sophophora</taxon>
    </lineage>
</organism>
<protein>
    <recommendedName>
        <fullName evidence="2">Adenylosuccinate synthetase</fullName>
        <shortName evidence="2">AMPSase</shortName>
        <shortName evidence="2">AdSS</shortName>
        <ecNumber evidence="2">6.3.4.4</ecNumber>
    </recommendedName>
    <alternativeName>
        <fullName evidence="2">IMP--aspartate ligase</fullName>
    </alternativeName>
</protein>
<evidence type="ECO:0000250" key="1"/>
<evidence type="ECO:0000255" key="2">
    <source>
        <dbReference type="HAMAP-Rule" id="MF_03125"/>
    </source>
</evidence>
<accession>Q299D3</accession>
<gene>
    <name type="ORF">GA14431</name>
</gene>
<keyword id="KW-0963">Cytoplasm</keyword>
<keyword id="KW-0342">GTP-binding</keyword>
<keyword id="KW-0436">Ligase</keyword>
<keyword id="KW-0460">Magnesium</keyword>
<keyword id="KW-0479">Metal-binding</keyword>
<keyword id="KW-0547">Nucleotide-binding</keyword>
<keyword id="KW-0658">Purine biosynthesis</keyword>
<keyword id="KW-1185">Reference proteome</keyword>
<comment type="function">
    <text evidence="1">Plays an important role in the de novo pathway and in the salvage pathway of purine nucleotide biosynthesis. Catalyzes the first committed step in the biosynthesis of AMP from IMP (By similarity).</text>
</comment>
<comment type="catalytic activity">
    <reaction evidence="2">
        <text>IMP + L-aspartate + GTP = N(6)-(1,2-dicarboxyethyl)-AMP + GDP + phosphate + 2 H(+)</text>
        <dbReference type="Rhea" id="RHEA:15753"/>
        <dbReference type="ChEBI" id="CHEBI:15378"/>
        <dbReference type="ChEBI" id="CHEBI:29991"/>
        <dbReference type="ChEBI" id="CHEBI:37565"/>
        <dbReference type="ChEBI" id="CHEBI:43474"/>
        <dbReference type="ChEBI" id="CHEBI:57567"/>
        <dbReference type="ChEBI" id="CHEBI:58053"/>
        <dbReference type="ChEBI" id="CHEBI:58189"/>
        <dbReference type="EC" id="6.3.4.4"/>
    </reaction>
</comment>
<comment type="cofactor">
    <cofactor evidence="2">
        <name>Mg(2+)</name>
        <dbReference type="ChEBI" id="CHEBI:18420"/>
    </cofactor>
    <text evidence="2">Binds 1 Mg(2+) ion per subunit.</text>
</comment>
<comment type="pathway">
    <text evidence="2">Purine metabolism; AMP biosynthesis via de novo pathway; AMP from IMP: step 1/2.</text>
</comment>
<comment type="subunit">
    <text evidence="2">Homodimer.</text>
</comment>
<comment type="subcellular location">
    <subcellularLocation>
        <location evidence="2">Cytoplasm</location>
    </subcellularLocation>
</comment>
<comment type="similarity">
    <text evidence="2">Belongs to the adenylosuccinate synthetase family.</text>
</comment>
<proteinExistence type="inferred from homology"/>
<dbReference type="EC" id="6.3.4.4" evidence="2"/>
<dbReference type="EMBL" id="CM000070">
    <property type="protein sequence ID" value="EAL27770.2"/>
    <property type="molecule type" value="Genomic_DNA"/>
</dbReference>
<dbReference type="SMR" id="Q299D3"/>
<dbReference type="FunCoup" id="Q299D3">
    <property type="interactions" value="1522"/>
</dbReference>
<dbReference type="STRING" id="46245.Q299D3"/>
<dbReference type="EnsemblMetazoa" id="FBtr0283686">
    <property type="protein sequence ID" value="FBpp0282124"/>
    <property type="gene ID" value="FBgn0074459"/>
</dbReference>
<dbReference type="KEGG" id="dpo:4801557"/>
<dbReference type="CTD" id="42466"/>
<dbReference type="eggNOG" id="KOG1355">
    <property type="taxonomic scope" value="Eukaryota"/>
</dbReference>
<dbReference type="HOGENOM" id="CLU_029848_3_0_1"/>
<dbReference type="InParanoid" id="Q299D3"/>
<dbReference type="OMA" id="QSYVRFL"/>
<dbReference type="UniPathway" id="UPA00075">
    <property type="reaction ID" value="UER00335"/>
</dbReference>
<dbReference type="Proteomes" id="UP000001819">
    <property type="component" value="Chromosome 2"/>
</dbReference>
<dbReference type="Bgee" id="FBgn0074459">
    <property type="expression patterns" value="Expressed in female reproductive system and 3 other cell types or tissues"/>
</dbReference>
<dbReference type="GO" id="GO:0005737">
    <property type="term" value="C:cytoplasm"/>
    <property type="evidence" value="ECO:0007669"/>
    <property type="project" value="UniProtKB-SubCell"/>
</dbReference>
<dbReference type="GO" id="GO:0004019">
    <property type="term" value="F:adenylosuccinate synthase activity"/>
    <property type="evidence" value="ECO:0007669"/>
    <property type="project" value="UniProtKB-UniRule"/>
</dbReference>
<dbReference type="GO" id="GO:0005525">
    <property type="term" value="F:GTP binding"/>
    <property type="evidence" value="ECO:0007669"/>
    <property type="project" value="UniProtKB-UniRule"/>
</dbReference>
<dbReference type="GO" id="GO:0000287">
    <property type="term" value="F:magnesium ion binding"/>
    <property type="evidence" value="ECO:0007669"/>
    <property type="project" value="UniProtKB-UniRule"/>
</dbReference>
<dbReference type="GO" id="GO:0044208">
    <property type="term" value="P:'de novo' AMP biosynthetic process"/>
    <property type="evidence" value="ECO:0007669"/>
    <property type="project" value="UniProtKB-UniRule"/>
</dbReference>
<dbReference type="GO" id="GO:0046040">
    <property type="term" value="P:IMP metabolic process"/>
    <property type="evidence" value="ECO:0007669"/>
    <property type="project" value="TreeGrafter"/>
</dbReference>
<dbReference type="CDD" id="cd03108">
    <property type="entry name" value="AdSS"/>
    <property type="match status" value="1"/>
</dbReference>
<dbReference type="FunFam" id="3.90.170.10:FF:000001">
    <property type="entry name" value="Adenylosuccinate synthetase"/>
    <property type="match status" value="1"/>
</dbReference>
<dbReference type="FunFam" id="1.10.300.10:FF:000002">
    <property type="entry name" value="Adenylosuccinate synthetase, chloroplastic"/>
    <property type="match status" value="1"/>
</dbReference>
<dbReference type="Gene3D" id="3.40.440.10">
    <property type="entry name" value="Adenylosuccinate Synthetase, subunit A, domain 1"/>
    <property type="match status" value="1"/>
</dbReference>
<dbReference type="Gene3D" id="1.10.300.10">
    <property type="entry name" value="Adenylosuccinate Synthetase, subunit A, domain 2"/>
    <property type="match status" value="1"/>
</dbReference>
<dbReference type="Gene3D" id="3.90.170.10">
    <property type="entry name" value="Adenylosuccinate Synthetase, subunit A, domain 3"/>
    <property type="match status" value="1"/>
</dbReference>
<dbReference type="HAMAP" id="MF_00011">
    <property type="entry name" value="Adenylosucc_synth"/>
    <property type="match status" value="1"/>
</dbReference>
<dbReference type="InterPro" id="IPR018220">
    <property type="entry name" value="Adenylosuccin_syn_GTP-bd"/>
</dbReference>
<dbReference type="InterPro" id="IPR033128">
    <property type="entry name" value="Adenylosuccin_syn_Lys_AS"/>
</dbReference>
<dbReference type="InterPro" id="IPR042109">
    <property type="entry name" value="Adenylosuccinate_synth_dom1"/>
</dbReference>
<dbReference type="InterPro" id="IPR042110">
    <property type="entry name" value="Adenylosuccinate_synth_dom2"/>
</dbReference>
<dbReference type="InterPro" id="IPR042111">
    <property type="entry name" value="Adenylosuccinate_synth_dom3"/>
</dbReference>
<dbReference type="InterPro" id="IPR001114">
    <property type="entry name" value="Adenylosuccinate_synthetase"/>
</dbReference>
<dbReference type="InterPro" id="IPR027417">
    <property type="entry name" value="P-loop_NTPase"/>
</dbReference>
<dbReference type="NCBIfam" id="NF002223">
    <property type="entry name" value="PRK01117.1"/>
    <property type="match status" value="1"/>
</dbReference>
<dbReference type="NCBIfam" id="TIGR00184">
    <property type="entry name" value="purA"/>
    <property type="match status" value="1"/>
</dbReference>
<dbReference type="PANTHER" id="PTHR11846">
    <property type="entry name" value="ADENYLOSUCCINATE SYNTHETASE"/>
    <property type="match status" value="1"/>
</dbReference>
<dbReference type="PANTHER" id="PTHR11846:SF0">
    <property type="entry name" value="ADENYLOSUCCINATE SYNTHETASE"/>
    <property type="match status" value="1"/>
</dbReference>
<dbReference type="Pfam" id="PF00709">
    <property type="entry name" value="Adenylsucc_synt"/>
    <property type="match status" value="1"/>
</dbReference>
<dbReference type="SMART" id="SM00788">
    <property type="entry name" value="Adenylsucc_synt"/>
    <property type="match status" value="1"/>
</dbReference>
<dbReference type="SUPFAM" id="SSF52540">
    <property type="entry name" value="P-loop containing nucleoside triphosphate hydrolases"/>
    <property type="match status" value="1"/>
</dbReference>
<dbReference type="PROSITE" id="PS01266">
    <property type="entry name" value="ADENYLOSUCCIN_SYN_1"/>
    <property type="match status" value="1"/>
</dbReference>
<dbReference type="PROSITE" id="PS00513">
    <property type="entry name" value="ADENYLOSUCCIN_SYN_2"/>
    <property type="match status" value="1"/>
</dbReference>
<sequence length="448" mass="49281">MSTTNAINGNLYEQLHQGRTNMYKSKVDVVLGAQWGDEGKGKVVDMLASEVDIVCRCQGGNNAGHTVVANGTEFDFHLLPSGVVNEKCISVIGNGVVIHLPSLFDEVLKNEAKGLQHLEHRLIISDRAHLVFDFHQHVDGMQEAEKGGKSLGTTKKGIGPAYSSKATRNGIRVGELLGDFNAFSDKFKLIVATHLRLFPSINVDVEAELTRYRDYAEKVRPYVKDTICFLHTALRNGKTILVEGANAAMLDIDFGTYPYVTSSNCSIGGVLTGLGLPPQTIGEVIGVVKAYTTRVGDGPFPSEQLNEIGDLLQTRGFEVGVTTKRKRRCGWLDIPLLRYTSLVNGYTCICLTKLDILDTLPEIKVAVSYKKANGDKLDHFPGTIAELGNIEVEYAVLPGWQTSTEHIRNFKELPENAQNYVRFLEKELSVPVRWVGVGKGRESIINVH</sequence>
<reference key="1">
    <citation type="journal article" date="2005" name="Genome Res.">
        <title>Comparative genome sequencing of Drosophila pseudoobscura: chromosomal, gene, and cis-element evolution.</title>
        <authorList>
            <person name="Richards S."/>
            <person name="Liu Y."/>
            <person name="Bettencourt B.R."/>
            <person name="Hradecky P."/>
            <person name="Letovsky S."/>
            <person name="Nielsen R."/>
            <person name="Thornton K."/>
            <person name="Hubisz M.J."/>
            <person name="Chen R."/>
            <person name="Meisel R.P."/>
            <person name="Couronne O."/>
            <person name="Hua S."/>
            <person name="Smith M.A."/>
            <person name="Zhang P."/>
            <person name="Liu J."/>
            <person name="Bussemaker H.J."/>
            <person name="van Batenburg M.F."/>
            <person name="Howells S.L."/>
            <person name="Scherer S.E."/>
            <person name="Sodergren E."/>
            <person name="Matthews B.B."/>
            <person name="Crosby M.A."/>
            <person name="Schroeder A.J."/>
            <person name="Ortiz-Barrientos D."/>
            <person name="Rives C.M."/>
            <person name="Metzker M.L."/>
            <person name="Muzny D.M."/>
            <person name="Scott G."/>
            <person name="Steffen D."/>
            <person name="Wheeler D.A."/>
            <person name="Worley K.C."/>
            <person name="Havlak P."/>
            <person name="Durbin K.J."/>
            <person name="Egan A."/>
            <person name="Gill R."/>
            <person name="Hume J."/>
            <person name="Morgan M.B."/>
            <person name="Miner G."/>
            <person name="Hamilton C."/>
            <person name="Huang Y."/>
            <person name="Waldron L."/>
            <person name="Verduzco D."/>
            <person name="Clerc-Blankenburg K.P."/>
            <person name="Dubchak I."/>
            <person name="Noor M.A.F."/>
            <person name="Anderson W."/>
            <person name="White K.P."/>
            <person name="Clark A.G."/>
            <person name="Schaeffer S.W."/>
            <person name="Gelbart W.M."/>
            <person name="Weinstock G.M."/>
            <person name="Gibbs R.A."/>
        </authorList>
    </citation>
    <scope>NUCLEOTIDE SEQUENCE [LARGE SCALE GENOMIC DNA]</scope>
    <source>
        <strain>MV2-25 / Tucson 14011-0121.94</strain>
    </source>
</reference>
<feature type="chain" id="PRO_0000399263" description="Adenylosuccinate synthetase">
    <location>
        <begin position="1"/>
        <end position="448"/>
    </location>
</feature>
<feature type="active site" description="Proton acceptor" evidence="2">
    <location>
        <position position="37"/>
    </location>
</feature>
<feature type="active site" description="Proton donor" evidence="2">
    <location>
        <position position="65"/>
    </location>
</feature>
<feature type="binding site" evidence="2">
    <location>
        <begin position="36"/>
        <end position="42"/>
    </location>
    <ligand>
        <name>GTP</name>
        <dbReference type="ChEBI" id="CHEBI:37565"/>
    </ligand>
</feature>
<feature type="binding site" description="in other chain" evidence="2">
    <location>
        <begin position="37"/>
        <end position="40"/>
    </location>
    <ligand>
        <name>IMP</name>
        <dbReference type="ChEBI" id="CHEBI:58053"/>
        <note>ligand shared between dimeric partners</note>
    </ligand>
</feature>
<feature type="binding site" evidence="2">
    <location>
        <position position="37"/>
    </location>
    <ligand>
        <name>Mg(2+)</name>
        <dbReference type="ChEBI" id="CHEBI:18420"/>
    </ligand>
</feature>
<feature type="binding site" description="in other chain" evidence="2">
    <location>
        <begin position="62"/>
        <end position="65"/>
    </location>
    <ligand>
        <name>IMP</name>
        <dbReference type="ChEBI" id="CHEBI:58053"/>
        <note>ligand shared between dimeric partners</note>
    </ligand>
</feature>
<feature type="binding site" evidence="2">
    <location>
        <begin position="64"/>
        <end position="66"/>
    </location>
    <ligand>
        <name>GTP</name>
        <dbReference type="ChEBI" id="CHEBI:37565"/>
    </ligand>
</feature>
<feature type="binding site" evidence="2">
    <location>
        <position position="64"/>
    </location>
    <ligand>
        <name>Mg(2+)</name>
        <dbReference type="ChEBI" id="CHEBI:18420"/>
    </ligand>
</feature>
<feature type="binding site" description="in other chain" evidence="2">
    <location>
        <position position="154"/>
    </location>
    <ligand>
        <name>IMP</name>
        <dbReference type="ChEBI" id="CHEBI:58053"/>
        <note>ligand shared between dimeric partners</note>
    </ligand>
</feature>
<feature type="binding site" evidence="2">
    <location>
        <position position="168"/>
    </location>
    <ligand>
        <name>IMP</name>
        <dbReference type="ChEBI" id="CHEBI:58053"/>
        <note>ligand shared between dimeric partners</note>
    </ligand>
</feature>
<feature type="binding site" description="in other chain" evidence="2">
    <location>
        <position position="246"/>
    </location>
    <ligand>
        <name>IMP</name>
        <dbReference type="ChEBI" id="CHEBI:58053"/>
        <note>ligand shared between dimeric partners</note>
    </ligand>
</feature>
<feature type="binding site" description="in other chain" evidence="2">
    <location>
        <position position="261"/>
    </location>
    <ligand>
        <name>IMP</name>
        <dbReference type="ChEBI" id="CHEBI:58053"/>
        <note>ligand shared between dimeric partners</note>
    </ligand>
</feature>
<feature type="binding site" evidence="2">
    <location>
        <begin position="321"/>
        <end position="327"/>
    </location>
    <ligand>
        <name>substrate</name>
    </ligand>
</feature>
<feature type="binding site" description="in other chain" evidence="2">
    <location>
        <position position="325"/>
    </location>
    <ligand>
        <name>IMP</name>
        <dbReference type="ChEBI" id="CHEBI:58053"/>
        <note>ligand shared between dimeric partners</note>
    </ligand>
</feature>
<feature type="binding site" evidence="2">
    <location>
        <position position="327"/>
    </location>
    <ligand>
        <name>GTP</name>
        <dbReference type="ChEBI" id="CHEBI:37565"/>
    </ligand>
</feature>
<feature type="binding site" evidence="2">
    <location>
        <begin position="353"/>
        <end position="355"/>
    </location>
    <ligand>
        <name>GTP</name>
        <dbReference type="ChEBI" id="CHEBI:37565"/>
    </ligand>
</feature>
<feature type="binding site" evidence="2">
    <location>
        <begin position="436"/>
        <end position="438"/>
    </location>
    <ligand>
        <name>GTP</name>
        <dbReference type="ChEBI" id="CHEBI:37565"/>
    </ligand>
</feature>